<protein>
    <recommendedName>
        <fullName evidence="3">Tryptophyllin-T3-1</fullName>
        <shortName evidence="3">Pha-T3-1</shortName>
    </recommendedName>
    <alternativeName>
        <fullName evidence="3">Tryptophyllin-9</fullName>
    </alternativeName>
</protein>
<dbReference type="GO" id="GO:0005576">
    <property type="term" value="C:extracellular region"/>
    <property type="evidence" value="ECO:0007669"/>
    <property type="project" value="UniProtKB-SubCell"/>
</dbReference>
<dbReference type="GO" id="GO:0006952">
    <property type="term" value="P:defense response"/>
    <property type="evidence" value="ECO:0007669"/>
    <property type="project" value="UniProtKB-KW"/>
</dbReference>
<dbReference type="InterPro" id="IPR013266">
    <property type="entry name" value="Tryptophillin"/>
</dbReference>
<dbReference type="Pfam" id="PF08248">
    <property type="entry name" value="Tryp_FSAP"/>
    <property type="match status" value="1"/>
</dbReference>
<comment type="subcellular location">
    <subcellularLocation>
        <location evidence="2">Secreted</location>
    </subcellularLocation>
</comment>
<comment type="tissue specificity">
    <text evidence="2">Expressed by the skin glands.</text>
</comment>
<comment type="mass spectrometry"/>
<comment type="similarity">
    <text evidence="1">Belongs to the frog skin active peptide (FSAP) family. Tryptophillin subfamily.</text>
</comment>
<sequence>QDKPFWPPPIYIM</sequence>
<reference evidence="4" key="1">
    <citation type="journal article" date="2007" name="J. Proteome Res.">
        <title>Amphibian skin secretomics: application of parallel quadrupole time-of-flight mass spectrometry and peptide precursor cDNA cloning to rapidly characterize the skin secretory peptidome of Phyllomedusa hypochondrialis azurea: discovery of a novel peptide family, the hyposins.</title>
        <authorList>
            <person name="Thompson A.H."/>
            <person name="Bjourson A.J."/>
            <person name="Orr D.F."/>
            <person name="Shaw C."/>
            <person name="McClean S."/>
        </authorList>
    </citation>
    <scope>PROTEIN SEQUENCE</scope>
    <scope>SUBCELLULAR LOCATION</scope>
    <scope>TISSUE SPECIFICITY</scope>
    <scope>MASS SPECTROMETRY</scope>
    <scope>PYROGLUTAMATE FORMATION AT GLN-1</scope>
    <source>
        <tissue evidence="2">Skin secretion</tissue>
    </source>
</reference>
<organism>
    <name type="scientific">Pithecopus azureus</name>
    <name type="common">Orange-legged monkey tree frog</name>
    <name type="synonym">Phyllomedusa azurea</name>
    <dbReference type="NCBI Taxonomy" id="2034991"/>
    <lineage>
        <taxon>Eukaryota</taxon>
        <taxon>Metazoa</taxon>
        <taxon>Chordata</taxon>
        <taxon>Craniata</taxon>
        <taxon>Vertebrata</taxon>
        <taxon>Euteleostomi</taxon>
        <taxon>Amphibia</taxon>
        <taxon>Batrachia</taxon>
        <taxon>Anura</taxon>
        <taxon>Neobatrachia</taxon>
        <taxon>Hyloidea</taxon>
        <taxon>Hylidae</taxon>
        <taxon>Phyllomedusinae</taxon>
        <taxon>Pithecopus</taxon>
    </lineage>
</organism>
<name>TY31_PITAZ</name>
<proteinExistence type="evidence at protein level"/>
<feature type="peptide" id="PRO_0000250417" description="Tryptophyllin-T3-1" evidence="2">
    <location>
        <begin position="1"/>
        <end position="13"/>
    </location>
</feature>
<feature type="modified residue" description="Pyrrolidone carboxylic acid" evidence="2">
    <location>
        <position position="1"/>
    </location>
</feature>
<keyword id="KW-0878">Amphibian defense peptide</keyword>
<keyword id="KW-0903">Direct protein sequencing</keyword>
<keyword id="KW-0873">Pyrrolidone carboxylic acid</keyword>
<keyword id="KW-0964">Secreted</keyword>
<evidence type="ECO:0000255" key="1"/>
<evidence type="ECO:0000269" key="2">
    <source>
    </source>
</evidence>
<evidence type="ECO:0000303" key="3">
    <source>
    </source>
</evidence>
<evidence type="ECO:0000305" key="4"/>
<accession>P84949</accession>